<gene>
    <name type="primary">FOXP2</name>
</gene>
<comment type="function">
    <text evidence="1">Transcriptional repressor that may play a role in the specification and differentiation of lung epithelium. May also play a role in developing neural, gastrointestinal and cardiovascular tissues. Can act with CTBP1 to synergistically repress transcription but CTPBP1 is not essential. Plays a role in synapse formation by regulating SRPX2 levels (By similarity).</text>
</comment>
<comment type="subunit">
    <text evidence="2 3">Forms homodimers and heterodimers with FOXP1 and FOXP4. Dimerization is required for DNA-binding. Interacts with CTBP1 (By similarity). Interacts with FOXP1 (By similarity). Interacts with TBR1 (By similarity). Interacts with ZMYM2 (By similarity).</text>
</comment>
<comment type="subcellular location">
    <subcellularLocation>
        <location evidence="6">Nucleus</location>
    </subcellularLocation>
</comment>
<comment type="domain">
    <text evidence="1">The leucine-zipper is required for dimerization and transcriptional repression.</text>
</comment>
<feature type="chain" id="PRO_0000091883" description="Forkhead box protein P2">
    <location>
        <begin position="1"/>
        <end position="716"/>
    </location>
</feature>
<feature type="zinc finger region" description="C2H2-type">
    <location>
        <begin position="347"/>
        <end position="372"/>
    </location>
</feature>
<feature type="DNA-binding region" description="Fork-head" evidence="4">
    <location>
        <begin position="505"/>
        <end position="595"/>
    </location>
</feature>
<feature type="region of interest" description="Disordered" evidence="5">
    <location>
        <begin position="1"/>
        <end position="45"/>
    </location>
</feature>
<feature type="region of interest" description="Disordered" evidence="5">
    <location>
        <begin position="286"/>
        <end position="340"/>
    </location>
</feature>
<feature type="region of interest" description="Leucine-zipper">
    <location>
        <begin position="389"/>
        <end position="410"/>
    </location>
</feature>
<feature type="region of interest" description="CTBP1-binding" evidence="1">
    <location>
        <begin position="423"/>
        <end position="427"/>
    </location>
</feature>
<feature type="region of interest" description="Disordered" evidence="5">
    <location>
        <begin position="439"/>
        <end position="466"/>
    </location>
</feature>
<feature type="region of interest" description="Disordered" evidence="5">
    <location>
        <begin position="650"/>
        <end position="669"/>
    </location>
</feature>
<feature type="region of interest" description="Disordered" evidence="5">
    <location>
        <begin position="679"/>
        <end position="716"/>
    </location>
</feature>
<feature type="compositionally biased region" description="Polar residues" evidence="5">
    <location>
        <begin position="1"/>
        <end position="28"/>
    </location>
</feature>
<feature type="compositionally biased region" description="Low complexity" evidence="5">
    <location>
        <begin position="293"/>
        <end position="306"/>
    </location>
</feature>
<feature type="compositionally biased region" description="Polar residues" evidence="5">
    <location>
        <begin position="316"/>
        <end position="325"/>
    </location>
</feature>
<feature type="compositionally biased region" description="Basic and acidic residues" evidence="5">
    <location>
        <begin position="327"/>
        <end position="338"/>
    </location>
</feature>
<feature type="compositionally biased region" description="Low complexity" evidence="5">
    <location>
        <begin position="439"/>
        <end position="460"/>
    </location>
</feature>
<feature type="compositionally biased region" description="Acidic residues" evidence="5">
    <location>
        <begin position="700"/>
        <end position="716"/>
    </location>
</feature>
<keyword id="KW-0238">DNA-binding</keyword>
<keyword id="KW-0479">Metal-binding</keyword>
<keyword id="KW-0539">Nucleus</keyword>
<keyword id="KW-1185">Reference proteome</keyword>
<keyword id="KW-0678">Repressor</keyword>
<keyword id="KW-0804">Transcription</keyword>
<keyword id="KW-0805">Transcription regulation</keyword>
<keyword id="KW-0862">Zinc</keyword>
<keyword id="KW-0863">Zinc-finger</keyword>
<name>FOXP2_PANPA</name>
<accession>Q8HZ00</accession>
<dbReference type="EMBL" id="AY143179">
    <property type="protein sequence ID" value="AAN60057.1"/>
    <property type="molecule type" value="mRNA"/>
</dbReference>
<dbReference type="RefSeq" id="NP_001266127.1">
    <property type="nucleotide sequence ID" value="NM_001279198.1"/>
</dbReference>
<dbReference type="RefSeq" id="XP_034819285.1">
    <property type="nucleotide sequence ID" value="XM_034963394.3"/>
</dbReference>
<dbReference type="RefSeq" id="XP_057158664.1">
    <property type="nucleotide sequence ID" value="XM_057302681.2"/>
</dbReference>
<dbReference type="RefSeq" id="XP_063461651.1">
    <property type="nucleotide sequence ID" value="XM_063605581.1"/>
</dbReference>
<dbReference type="RefSeq" id="XP_063461652.1">
    <property type="nucleotide sequence ID" value="XM_063605582.1"/>
</dbReference>
<dbReference type="RefSeq" id="XP_063461653.1">
    <property type="nucleotide sequence ID" value="XM_063605583.1"/>
</dbReference>
<dbReference type="SMR" id="Q8HZ00"/>
<dbReference type="STRING" id="9597.ENSPPAP00000015762"/>
<dbReference type="GeneID" id="100990292"/>
<dbReference type="KEGG" id="pps:100990292"/>
<dbReference type="CTD" id="93986"/>
<dbReference type="eggNOG" id="KOG4385">
    <property type="taxonomic scope" value="Eukaryota"/>
</dbReference>
<dbReference type="Proteomes" id="UP000240080">
    <property type="component" value="Unplaced"/>
</dbReference>
<dbReference type="GO" id="GO:0005634">
    <property type="term" value="C:nucleus"/>
    <property type="evidence" value="ECO:0007669"/>
    <property type="project" value="UniProtKB-SubCell"/>
</dbReference>
<dbReference type="GO" id="GO:0003677">
    <property type="term" value="F:DNA binding"/>
    <property type="evidence" value="ECO:0000250"/>
    <property type="project" value="UniProtKB"/>
</dbReference>
<dbReference type="GO" id="GO:0001227">
    <property type="term" value="F:DNA-binding transcription repressor activity, RNA polymerase II-specific"/>
    <property type="evidence" value="ECO:0007669"/>
    <property type="project" value="TreeGrafter"/>
</dbReference>
<dbReference type="GO" id="GO:0042803">
    <property type="term" value="F:protein homodimerization activity"/>
    <property type="evidence" value="ECO:0000250"/>
    <property type="project" value="UniProtKB"/>
</dbReference>
<dbReference type="GO" id="GO:0000978">
    <property type="term" value="F:RNA polymerase II cis-regulatory region sequence-specific DNA binding"/>
    <property type="evidence" value="ECO:0007669"/>
    <property type="project" value="TreeGrafter"/>
</dbReference>
<dbReference type="GO" id="GO:0008270">
    <property type="term" value="F:zinc ion binding"/>
    <property type="evidence" value="ECO:0007669"/>
    <property type="project" value="UniProtKB-KW"/>
</dbReference>
<dbReference type="GO" id="GO:0021757">
    <property type="term" value="P:caudate nucleus development"/>
    <property type="evidence" value="ECO:0000250"/>
    <property type="project" value="UniProtKB"/>
</dbReference>
<dbReference type="GO" id="GO:0021758">
    <property type="term" value="P:putamen development"/>
    <property type="evidence" value="ECO:0000250"/>
    <property type="project" value="UniProtKB"/>
</dbReference>
<dbReference type="CDD" id="cd20065">
    <property type="entry name" value="FH_FOXP2"/>
    <property type="match status" value="1"/>
</dbReference>
<dbReference type="FunFam" id="1.20.5.340:FF:000005">
    <property type="entry name" value="Forkhead box P1, isoform CRA_f"/>
    <property type="match status" value="1"/>
</dbReference>
<dbReference type="FunFam" id="1.10.10.10:FF:000010">
    <property type="entry name" value="Forkhead box P2 isoform B"/>
    <property type="match status" value="1"/>
</dbReference>
<dbReference type="Gene3D" id="1.20.5.340">
    <property type="match status" value="1"/>
</dbReference>
<dbReference type="Gene3D" id="1.10.10.10">
    <property type="entry name" value="Winged helix-like DNA-binding domain superfamily/Winged helix DNA-binding domain"/>
    <property type="match status" value="1"/>
</dbReference>
<dbReference type="InterPro" id="IPR047412">
    <property type="entry name" value="FH_FOXP1_P2"/>
</dbReference>
<dbReference type="InterPro" id="IPR001766">
    <property type="entry name" value="Fork_head_dom"/>
</dbReference>
<dbReference type="InterPro" id="IPR050998">
    <property type="entry name" value="FOXP"/>
</dbReference>
<dbReference type="InterPro" id="IPR032354">
    <property type="entry name" value="FOXP-CC"/>
</dbReference>
<dbReference type="InterPro" id="IPR030456">
    <property type="entry name" value="TF_fork_head_CS_2"/>
</dbReference>
<dbReference type="InterPro" id="IPR036388">
    <property type="entry name" value="WH-like_DNA-bd_sf"/>
</dbReference>
<dbReference type="InterPro" id="IPR036390">
    <property type="entry name" value="WH_DNA-bd_sf"/>
</dbReference>
<dbReference type="PANTHER" id="PTHR45796">
    <property type="entry name" value="FORKHEAD BOX P, ISOFORM C"/>
    <property type="match status" value="1"/>
</dbReference>
<dbReference type="PANTHER" id="PTHR45796:SF9">
    <property type="entry name" value="FORKHEAD BOX PROTEIN P2"/>
    <property type="match status" value="1"/>
</dbReference>
<dbReference type="Pfam" id="PF00250">
    <property type="entry name" value="Forkhead"/>
    <property type="match status" value="1"/>
</dbReference>
<dbReference type="Pfam" id="PF16159">
    <property type="entry name" value="FOXP-CC"/>
    <property type="match status" value="1"/>
</dbReference>
<dbReference type="PRINTS" id="PR00053">
    <property type="entry name" value="FORKHEAD"/>
</dbReference>
<dbReference type="SMART" id="SM00339">
    <property type="entry name" value="FH"/>
    <property type="match status" value="1"/>
</dbReference>
<dbReference type="SUPFAM" id="SSF46785">
    <property type="entry name" value="Winged helix' DNA-binding domain"/>
    <property type="match status" value="1"/>
</dbReference>
<dbReference type="PROSITE" id="PS00658">
    <property type="entry name" value="FORK_HEAD_2"/>
    <property type="match status" value="1"/>
</dbReference>
<dbReference type="PROSITE" id="PS50039">
    <property type="entry name" value="FORK_HEAD_3"/>
    <property type="match status" value="1"/>
</dbReference>
<dbReference type="PROSITE" id="PS00028">
    <property type="entry name" value="ZINC_FINGER_C2H2_1"/>
    <property type="match status" value="1"/>
</dbReference>
<evidence type="ECO:0000250" key="1"/>
<evidence type="ECO:0000250" key="2">
    <source>
        <dbReference type="UniProtKB" id="O15409"/>
    </source>
</evidence>
<evidence type="ECO:0000250" key="3">
    <source>
        <dbReference type="UniProtKB" id="P58463"/>
    </source>
</evidence>
<evidence type="ECO:0000255" key="4">
    <source>
        <dbReference type="PROSITE-ProRule" id="PRU00089"/>
    </source>
</evidence>
<evidence type="ECO:0000256" key="5">
    <source>
        <dbReference type="SAM" id="MobiDB-lite"/>
    </source>
</evidence>
<evidence type="ECO:0000305" key="6"/>
<proteinExistence type="evidence at transcript level"/>
<organism>
    <name type="scientific">Pan paniscus</name>
    <name type="common">Pygmy chimpanzee</name>
    <name type="synonym">Bonobo</name>
    <dbReference type="NCBI Taxonomy" id="9597"/>
    <lineage>
        <taxon>Eukaryota</taxon>
        <taxon>Metazoa</taxon>
        <taxon>Chordata</taxon>
        <taxon>Craniata</taxon>
        <taxon>Vertebrata</taxon>
        <taxon>Euteleostomi</taxon>
        <taxon>Mammalia</taxon>
        <taxon>Eutheria</taxon>
        <taxon>Euarchontoglires</taxon>
        <taxon>Primates</taxon>
        <taxon>Haplorrhini</taxon>
        <taxon>Catarrhini</taxon>
        <taxon>Hominidae</taxon>
        <taxon>Pan</taxon>
    </lineage>
</organism>
<protein>
    <recommendedName>
        <fullName>Forkhead box protein P2</fullName>
    </recommendedName>
</protein>
<reference key="1">
    <citation type="journal article" date="2002" name="Genetics">
        <title>Accelerated protein evolution and origins of human-specific features: Foxp2 as an example.</title>
        <authorList>
            <person name="Zhang J."/>
            <person name="Webb D.M."/>
            <person name="Podlaha O."/>
        </authorList>
    </citation>
    <scope>NUCLEOTIDE SEQUENCE [MRNA]</scope>
</reference>
<sequence length="716" mass="80061">MMQESATETISNSSMNQNGMSTLSSQLDAGSRDGRSSGDTSSEVSTVELLHLQQQQALQAARQLLLQQQTSGLKSPKSSDKQRPLQVPVSVAMMTPQVITPQQMQQILQQQVLSPQQLQALLQQQQAVMLQQQQLQEFYKKQQEQLHLQLLQQQQQQQQQQQQQQQQQQQQQQQQQQQQQQQQQQQQQQQQQHPGKQAKEQQQQQQQQQQLAAQQLVFQQQLLQMQQLQQQQHLLSLQRQGLISIPPGQAALPVQSLPQAGLSPAEIQQLWKEVTGVHSMEDNGIKHGGLDLTTNNSSSTTSSTTSKASPPITHHSIVNGQSSVLNARRDSSSHEETGASHTLYGHGVCKWPGCESICEDFGQFLKHLNNEHALDDRSTAQCRVQMQVVQQLEIQLSKERERLQAMMTHLHMRPSEPKPSPKPLNLVSSVTMSKNMLETSPQSLPQTPTTPTAPVTPITQGPSVITPASVPNVGAIRRRHSDKYNIPMSSEIAPNYEFYKNADVRPPFTYATLIRQAIMESSDRQLTLNEIYSWFTRTFAYFRRNAATWKNAVRHNLSLHKCFVRVENVKGAVWTVDEVEYQKRRSQKITGSPTLVKNIPTSLGYGAALNASLQAALAESSLPLLSNPGLINNASSGLLQAVHEDLNGSLDHIDSNGNSSPGCSPQPHIHSIHVKEEPVIAEDEDCPMSLVTTANHSPELEDDREIEEEPLSEDLE</sequence>